<protein>
    <recommendedName>
        <fullName evidence="1">Small ribosomal subunit protein uS4</fullName>
    </recommendedName>
    <alternativeName>
        <fullName evidence="2">30S ribosomal protein S4</fullName>
    </alternativeName>
</protein>
<gene>
    <name evidence="1" type="primary">rpsD</name>
    <name type="ordered locus">APP7_1869</name>
</gene>
<organism>
    <name type="scientific">Actinobacillus pleuropneumoniae serotype 7 (strain AP76)</name>
    <dbReference type="NCBI Taxonomy" id="537457"/>
    <lineage>
        <taxon>Bacteria</taxon>
        <taxon>Pseudomonadati</taxon>
        <taxon>Pseudomonadota</taxon>
        <taxon>Gammaproteobacteria</taxon>
        <taxon>Pasteurellales</taxon>
        <taxon>Pasteurellaceae</taxon>
        <taxon>Actinobacillus</taxon>
    </lineage>
</organism>
<keyword id="KW-0687">Ribonucleoprotein</keyword>
<keyword id="KW-0689">Ribosomal protein</keyword>
<keyword id="KW-0694">RNA-binding</keyword>
<keyword id="KW-0699">rRNA-binding</keyword>
<sequence>MARYLGPKLKLSRREGTDLFLKSGVRAIESKCRNRLDVAPGQHGARKPRLSDYGSQLREKQKVRRIYGILERQFRNYYTEANRLKGNTGENLLVLLEGRLDNVVYRMGFAATRAEARQLVSHKSIVVNGRVVNIPSYQVSVDDVVAVREKSKKQARIKASLELATQREKPTWLEVDATKMEGVFKRTPERSDLSADINEHLIVELYSK</sequence>
<comment type="function">
    <text evidence="1">One of the primary rRNA binding proteins, it binds directly to 16S rRNA where it nucleates assembly of the body of the 30S subunit.</text>
</comment>
<comment type="function">
    <text evidence="1">With S5 and S12 plays an important role in translational accuracy.</text>
</comment>
<comment type="subunit">
    <text evidence="1">Part of the 30S ribosomal subunit. Contacts protein S5. The interaction surface between S4 and S5 is involved in control of translational fidelity.</text>
</comment>
<comment type="similarity">
    <text evidence="1">Belongs to the universal ribosomal protein uS4 family.</text>
</comment>
<reference key="1">
    <citation type="submission" date="2008-06" db="EMBL/GenBank/DDBJ databases">
        <title>Genome and proteome analysis of A. pleuropneumoniae serotype 7.</title>
        <authorList>
            <person name="Linke B."/>
            <person name="Buettner F."/>
            <person name="Martinez-Arias R."/>
            <person name="Goesmann A."/>
            <person name="Baltes N."/>
            <person name="Tegetmeyer H."/>
            <person name="Singh M."/>
            <person name="Gerlach G.F."/>
        </authorList>
    </citation>
    <scope>NUCLEOTIDE SEQUENCE [LARGE SCALE GENOMIC DNA]</scope>
    <source>
        <strain>AP76</strain>
    </source>
</reference>
<accession>B3GZ35</accession>
<feature type="chain" id="PRO_1000140675" description="Small ribosomal subunit protein uS4">
    <location>
        <begin position="1"/>
        <end position="208"/>
    </location>
</feature>
<feature type="domain" description="S4 RNA-binding" evidence="1">
    <location>
        <begin position="98"/>
        <end position="158"/>
    </location>
</feature>
<proteinExistence type="inferred from homology"/>
<name>RS4_ACTP7</name>
<evidence type="ECO:0000255" key="1">
    <source>
        <dbReference type="HAMAP-Rule" id="MF_01306"/>
    </source>
</evidence>
<evidence type="ECO:0000305" key="2"/>
<dbReference type="EMBL" id="CP001091">
    <property type="protein sequence ID" value="ACE62521.1"/>
    <property type="molecule type" value="Genomic_DNA"/>
</dbReference>
<dbReference type="RefSeq" id="WP_005599325.1">
    <property type="nucleotide sequence ID" value="NC_010939.1"/>
</dbReference>
<dbReference type="SMR" id="B3GZ35"/>
<dbReference type="GeneID" id="92743631"/>
<dbReference type="KEGG" id="apa:APP7_1869"/>
<dbReference type="HOGENOM" id="CLU_092403_0_2_6"/>
<dbReference type="Proteomes" id="UP000001226">
    <property type="component" value="Chromosome"/>
</dbReference>
<dbReference type="GO" id="GO:0015935">
    <property type="term" value="C:small ribosomal subunit"/>
    <property type="evidence" value="ECO:0007669"/>
    <property type="project" value="InterPro"/>
</dbReference>
<dbReference type="GO" id="GO:0019843">
    <property type="term" value="F:rRNA binding"/>
    <property type="evidence" value="ECO:0007669"/>
    <property type="project" value="UniProtKB-UniRule"/>
</dbReference>
<dbReference type="GO" id="GO:0003735">
    <property type="term" value="F:structural constituent of ribosome"/>
    <property type="evidence" value="ECO:0007669"/>
    <property type="project" value="InterPro"/>
</dbReference>
<dbReference type="GO" id="GO:0042274">
    <property type="term" value="P:ribosomal small subunit biogenesis"/>
    <property type="evidence" value="ECO:0007669"/>
    <property type="project" value="TreeGrafter"/>
</dbReference>
<dbReference type="GO" id="GO:0006412">
    <property type="term" value="P:translation"/>
    <property type="evidence" value="ECO:0007669"/>
    <property type="project" value="UniProtKB-UniRule"/>
</dbReference>
<dbReference type="CDD" id="cd00165">
    <property type="entry name" value="S4"/>
    <property type="match status" value="1"/>
</dbReference>
<dbReference type="FunFam" id="1.10.1050.10:FF:000001">
    <property type="entry name" value="30S ribosomal protein S4"/>
    <property type="match status" value="1"/>
</dbReference>
<dbReference type="FunFam" id="3.10.290.10:FF:000001">
    <property type="entry name" value="30S ribosomal protein S4"/>
    <property type="match status" value="1"/>
</dbReference>
<dbReference type="Gene3D" id="1.10.1050.10">
    <property type="entry name" value="Ribosomal Protein S4 Delta 41, Chain A, domain 1"/>
    <property type="match status" value="1"/>
</dbReference>
<dbReference type="Gene3D" id="3.10.290.10">
    <property type="entry name" value="RNA-binding S4 domain"/>
    <property type="match status" value="1"/>
</dbReference>
<dbReference type="HAMAP" id="MF_01306_B">
    <property type="entry name" value="Ribosomal_uS4_B"/>
    <property type="match status" value="1"/>
</dbReference>
<dbReference type="InterPro" id="IPR022801">
    <property type="entry name" value="Ribosomal_uS4"/>
</dbReference>
<dbReference type="InterPro" id="IPR005709">
    <property type="entry name" value="Ribosomal_uS4_bac-type"/>
</dbReference>
<dbReference type="InterPro" id="IPR018079">
    <property type="entry name" value="Ribosomal_uS4_CS"/>
</dbReference>
<dbReference type="InterPro" id="IPR001912">
    <property type="entry name" value="Ribosomal_uS4_N"/>
</dbReference>
<dbReference type="InterPro" id="IPR002942">
    <property type="entry name" value="S4_RNA-bd"/>
</dbReference>
<dbReference type="InterPro" id="IPR036986">
    <property type="entry name" value="S4_RNA-bd_sf"/>
</dbReference>
<dbReference type="NCBIfam" id="NF003717">
    <property type="entry name" value="PRK05327.1"/>
    <property type="match status" value="1"/>
</dbReference>
<dbReference type="NCBIfam" id="TIGR01017">
    <property type="entry name" value="rpsD_bact"/>
    <property type="match status" value="1"/>
</dbReference>
<dbReference type="PANTHER" id="PTHR11831">
    <property type="entry name" value="30S 40S RIBOSOMAL PROTEIN"/>
    <property type="match status" value="1"/>
</dbReference>
<dbReference type="PANTHER" id="PTHR11831:SF4">
    <property type="entry name" value="SMALL RIBOSOMAL SUBUNIT PROTEIN US4M"/>
    <property type="match status" value="1"/>
</dbReference>
<dbReference type="Pfam" id="PF00163">
    <property type="entry name" value="Ribosomal_S4"/>
    <property type="match status" value="1"/>
</dbReference>
<dbReference type="Pfam" id="PF01479">
    <property type="entry name" value="S4"/>
    <property type="match status" value="1"/>
</dbReference>
<dbReference type="SMART" id="SM01390">
    <property type="entry name" value="Ribosomal_S4"/>
    <property type="match status" value="1"/>
</dbReference>
<dbReference type="SMART" id="SM00363">
    <property type="entry name" value="S4"/>
    <property type="match status" value="1"/>
</dbReference>
<dbReference type="SUPFAM" id="SSF55174">
    <property type="entry name" value="Alpha-L RNA-binding motif"/>
    <property type="match status" value="1"/>
</dbReference>
<dbReference type="PROSITE" id="PS00632">
    <property type="entry name" value="RIBOSOMAL_S4"/>
    <property type="match status" value="1"/>
</dbReference>
<dbReference type="PROSITE" id="PS50889">
    <property type="entry name" value="S4"/>
    <property type="match status" value="1"/>
</dbReference>